<accession>P0DW33</accession>
<organism>
    <name type="scientific">Salmonella montevideo</name>
    <dbReference type="NCBI Taxonomy" id="115981"/>
    <lineage>
        <taxon>Bacteria</taxon>
        <taxon>Pseudomonadati</taxon>
        <taxon>Pseudomonadota</taxon>
        <taxon>Gammaproteobacteria</taxon>
        <taxon>Enterobacterales</taxon>
        <taxon>Enterobacteriaceae</taxon>
        <taxon>Salmonella</taxon>
    </lineage>
</organism>
<dbReference type="EC" id="2.4.2.-" evidence="6"/>
<dbReference type="EMBL" id="AESH01000017">
    <property type="protein sequence ID" value="EFY12575.1"/>
    <property type="molecule type" value="Genomic_DNA"/>
</dbReference>
<dbReference type="RefSeq" id="WP_001542917.1">
    <property type="nucleotide sequence ID" value="NZ_VCUN02000003.1"/>
</dbReference>
<dbReference type="PDB" id="7UI4">
    <property type="method" value="X-ray"/>
    <property type="resolution" value="2.51 A"/>
    <property type="chains" value="A=1-416"/>
</dbReference>
<dbReference type="PDBsum" id="7UI4"/>
<dbReference type="SASBDB" id="P0DW33"/>
<dbReference type="SMR" id="P0DW33"/>
<dbReference type="GO" id="GO:0016757">
    <property type="term" value="F:glycosyltransferase activity"/>
    <property type="evidence" value="ECO:0007669"/>
    <property type="project" value="UniProtKB-KW"/>
</dbReference>
<dbReference type="GO" id="GO:0046872">
    <property type="term" value="F:metal ion binding"/>
    <property type="evidence" value="ECO:0007669"/>
    <property type="project" value="UniProtKB-KW"/>
</dbReference>
<dbReference type="GO" id="GO:0006400">
    <property type="term" value="P:tRNA modification"/>
    <property type="evidence" value="ECO:0007669"/>
    <property type="project" value="InterPro"/>
</dbReference>
<dbReference type="Gene3D" id="3.20.20.105">
    <property type="entry name" value="Queuine tRNA-ribosyltransferase-like"/>
    <property type="match status" value="1"/>
</dbReference>
<dbReference type="InterPro" id="IPR053537">
    <property type="entry name" value="DNA-guanine_TGase"/>
</dbReference>
<dbReference type="InterPro" id="IPR036511">
    <property type="entry name" value="TGT-like_sf"/>
</dbReference>
<dbReference type="InterPro" id="IPR002616">
    <property type="entry name" value="tRNA_ribo_trans-like"/>
</dbReference>
<dbReference type="NCBIfam" id="NF041059">
    <property type="entry name" value="DpdA"/>
    <property type="match status" value="1"/>
</dbReference>
<dbReference type="Pfam" id="PF01702">
    <property type="entry name" value="TGT"/>
    <property type="match status" value="1"/>
</dbReference>
<dbReference type="SUPFAM" id="SSF51713">
    <property type="entry name" value="tRNA-guanine transglycosylase"/>
    <property type="match status" value="1"/>
</dbReference>
<proteinExistence type="evidence at protein level"/>
<sequence length="416" mass="48101">MSKLKYFFPDSQDFIDPSFDFVRETRNEHRVRQRDDHYPHEVFPHPYDGMLVSKAVVDGLGGGESKYTRAQRLRYFRNGMKHFFRLPDNMQTMGDCGAFTYVNQDVPPYRVEEVIEFYETSRFNYGVSLDHIIFGYEKPGESFSGEVLAECRRRQDITLTLAQDFLVKSQKSCFTPFGVAHGWNKKSYRQSVEALLAMGYKNITMGGMVPLKTAQILETLEEIKPLLKSDTQVHLLGIARPESFADFIRLGVTSIDSTTPLQQAFKDRKNNYHTPEGRAYTAVRVPQFDANPSLSRKIKSGVIDQDVARHLEKDAMHALFEYDNNALSLEKTLEAVLAYERLHSGEKEAEKIRADYERTLGDRPWRKCECNICRSIGINVIIFRGAERNRRRGFHNIQVLYNRLQYTLSLRSEDKS</sequence>
<keyword id="KW-0002">3D-structure</keyword>
<keyword id="KW-0328">Glycosyltransferase</keyword>
<keyword id="KW-0479">Metal-binding</keyword>
<keyword id="KW-0808">Transferase</keyword>
<keyword id="KW-0862">Zinc</keyword>
<reference key="1">
    <citation type="journal article" date="2011" name="N. Engl. J. Med.">
        <title>Identification of a salmonellosis outbreak by means of molecular sequencing.</title>
        <authorList>
            <person name="Lienau E.K."/>
            <person name="Strain E."/>
            <person name="Wang C."/>
            <person name="Zheng J."/>
            <person name="Ottesen A.R."/>
            <person name="Keys C.E."/>
            <person name="Hammack T.S."/>
            <person name="Musser S.M."/>
            <person name="Brown E.W."/>
            <person name="Allard M.W."/>
            <person name="Cao G."/>
            <person name="Meng J."/>
            <person name="Stones R."/>
        </authorList>
    </citation>
    <scope>NUCLEOTIDE SEQUENCE [LARGE SCALE GENOMIC DNA]</scope>
    <source>
        <strain>315996572</strain>
    </source>
</reference>
<reference key="2">
    <citation type="journal article" date="2016" name="Proc. Natl. Acad. Sci. U.S.A.">
        <title>Novel genomic island modifies DNA with 7-deazaguanine derivatives.</title>
        <authorList>
            <person name="Thiaville J.J."/>
            <person name="Kellner S.M."/>
            <person name="Yuan Y."/>
            <person name="Hutinet G."/>
            <person name="Thiaville P.C."/>
            <person name="Jumpathong W."/>
            <person name="Mohapatra S."/>
            <person name="Brochier-Armanet C."/>
            <person name="Letarov A.V."/>
            <person name="Hillebrand R."/>
            <person name="Malik C.K."/>
            <person name="Rizzo C.J."/>
            <person name="Dedon P.C."/>
            <person name="de Crecy-Lagard V."/>
        </authorList>
    </citation>
    <scope>FUNCTION</scope>
    <scope>DISRUPTION PHENOTYPE</scope>
    <source>
        <strain>ATCC BAA-710</strain>
    </source>
</reference>
<reference key="3">
    <citation type="journal article" date="2018" name="Mol. Microbiol.">
        <title>Identification of the minimal bacterial 2'-deoxy-7-amido-7-deazaguanine synthesis machinery.</title>
        <authorList>
            <person name="Yuan Y."/>
            <person name="Hutinet G."/>
            <person name="Valera J.G."/>
            <person name="Hu J."/>
            <person name="Hillebrand R."/>
            <person name="Gustafson A."/>
            <person name="Iwata-Reuyl D."/>
            <person name="Dedon P.C."/>
            <person name="de Crecy-Lagard V."/>
        </authorList>
    </citation>
    <scope>FUNCTION</scope>
    <scope>DISRUPTION PHENOTYPE</scope>
    <source>
        <strain>ATCC BAA-710</strain>
    </source>
</reference>
<feature type="chain" id="PRO_0000456249" description="DNA-guanine transglycosylase">
    <location>
        <begin position="1"/>
        <end position="416"/>
    </location>
</feature>
<feature type="active site" description="Proton acceptor" evidence="1">
    <location>
        <position position="95"/>
    </location>
</feature>
<feature type="active site" description="Nucleophile" evidence="1">
    <location>
        <position position="256"/>
    </location>
</feature>
<feature type="binding site" evidence="1">
    <location>
        <position position="368"/>
    </location>
    <ligand>
        <name>Zn(2+)</name>
        <dbReference type="ChEBI" id="CHEBI:29105"/>
    </ligand>
</feature>
<feature type="binding site" evidence="1">
    <location>
        <position position="370"/>
    </location>
    <ligand>
        <name>Zn(2+)</name>
        <dbReference type="ChEBI" id="CHEBI:29105"/>
    </ligand>
</feature>
<feature type="binding site" evidence="1">
    <location>
        <position position="373"/>
    </location>
    <ligand>
        <name>Zn(2+)</name>
        <dbReference type="ChEBI" id="CHEBI:29105"/>
    </ligand>
</feature>
<feature type="binding site" evidence="1">
    <location>
        <position position="395"/>
    </location>
    <ligand>
        <name>Zn(2+)</name>
        <dbReference type="ChEBI" id="CHEBI:29105"/>
    </ligand>
</feature>
<feature type="strand" evidence="8">
    <location>
        <begin position="4"/>
        <end position="9"/>
    </location>
</feature>
<feature type="turn" evidence="8">
    <location>
        <begin position="21"/>
        <end position="23"/>
    </location>
</feature>
<feature type="turn" evidence="8">
    <location>
        <begin position="32"/>
        <end position="35"/>
    </location>
</feature>
<feature type="helix" evidence="8">
    <location>
        <begin position="39"/>
        <end position="41"/>
    </location>
</feature>
<feature type="strand" evidence="8">
    <location>
        <begin position="48"/>
        <end position="53"/>
    </location>
</feature>
<feature type="helix" evidence="8">
    <location>
        <begin position="54"/>
        <end position="57"/>
    </location>
</feature>
<feature type="strand" evidence="8">
    <location>
        <begin position="59"/>
        <end position="65"/>
    </location>
</feature>
<feature type="helix" evidence="8">
    <location>
        <begin position="69"/>
        <end position="78"/>
    </location>
</feature>
<feature type="helix" evidence="8">
    <location>
        <begin position="80"/>
        <end position="84"/>
    </location>
</feature>
<feature type="strand" evidence="8">
    <location>
        <begin position="91"/>
        <end position="95"/>
    </location>
</feature>
<feature type="helix" evidence="8">
    <location>
        <begin position="98"/>
        <end position="101"/>
    </location>
</feature>
<feature type="strand" evidence="8">
    <location>
        <begin position="104"/>
        <end position="106"/>
    </location>
</feature>
<feature type="helix" evidence="8">
    <location>
        <begin position="111"/>
        <end position="121"/>
    </location>
</feature>
<feature type="strand" evidence="8">
    <location>
        <begin position="124"/>
        <end position="127"/>
    </location>
</feature>
<feature type="helix" evidence="8">
    <location>
        <begin position="145"/>
        <end position="168"/>
    </location>
</feature>
<feature type="turn" evidence="8">
    <location>
        <begin position="169"/>
        <end position="171"/>
    </location>
</feature>
<feature type="strand" evidence="8">
    <location>
        <begin position="173"/>
        <end position="180"/>
    </location>
</feature>
<feature type="helix" evidence="8">
    <location>
        <begin position="185"/>
        <end position="198"/>
    </location>
</feature>
<feature type="strand" evidence="8">
    <location>
        <begin position="201"/>
        <end position="205"/>
    </location>
</feature>
<feature type="helix" evidence="8">
    <location>
        <begin position="213"/>
        <end position="223"/>
    </location>
</feature>
<feature type="helix" evidence="8">
    <location>
        <begin position="224"/>
        <end position="226"/>
    </location>
</feature>
<feature type="strand" evidence="8">
    <location>
        <begin position="232"/>
        <end position="236"/>
    </location>
</feature>
<feature type="helix" evidence="8">
    <location>
        <begin position="241"/>
        <end position="243"/>
    </location>
</feature>
<feature type="helix" evidence="8">
    <location>
        <begin position="244"/>
        <end position="249"/>
    </location>
</feature>
<feature type="strand" evidence="8">
    <location>
        <begin position="254"/>
        <end position="256"/>
    </location>
</feature>
<feature type="helix" evidence="8">
    <location>
        <begin position="259"/>
        <end position="266"/>
    </location>
</feature>
<feature type="strand" evidence="8">
    <location>
        <begin position="275"/>
        <end position="277"/>
    </location>
</feature>
<feature type="turn" evidence="8">
    <location>
        <begin position="288"/>
        <end position="290"/>
    </location>
</feature>
<feature type="helix" evidence="8">
    <location>
        <begin position="292"/>
        <end position="299"/>
    </location>
</feature>
<feature type="helix" evidence="8">
    <location>
        <begin position="305"/>
        <end position="323"/>
    </location>
</feature>
<feature type="helix" evidence="8">
    <location>
        <begin position="329"/>
        <end position="344"/>
    </location>
</feature>
<feature type="helix" evidence="8">
    <location>
        <begin position="346"/>
        <end position="362"/>
    </location>
</feature>
<feature type="helix" evidence="8">
    <location>
        <begin position="364"/>
        <end position="367"/>
    </location>
</feature>
<feature type="helix" evidence="8">
    <location>
        <begin position="371"/>
        <end position="376"/>
    </location>
</feature>
<feature type="helix" evidence="8">
    <location>
        <begin position="377"/>
        <end position="381"/>
    </location>
</feature>
<feature type="helix" evidence="8">
    <location>
        <begin position="386"/>
        <end position="408"/>
    </location>
</feature>
<comment type="function">
    <text evidence="2 3">Part of the dpd cluster involved in the insertion of 7-deazaguanine derivatives in DNA (PubMed:26929322, PubMed:30159947). DpdA may insert 7-cyano-7-deazaguanine (preQ0) into DNA with the help of DpdB (PubMed:30159947). DpdA and dpdB are necessary and sufficient to synthesize 2'-deoxy-7-cyano-7-deazaguanosine (dPreQ0) (PubMed:30159947).</text>
</comment>
<comment type="cofactor">
    <cofactor evidence="1">
        <name>Zn(2+)</name>
        <dbReference type="ChEBI" id="CHEBI:29105"/>
    </cofactor>
    <text evidence="1">Binds 1 zinc ion per subunit.</text>
</comment>
<comment type="disruption phenotype">
    <text evidence="2 3">Mutant lacking the whole dpd gene cluster does not contain dPreQ0 and 2'-deoxy-7-amido-7-deazaguanosine (dADG) in DNA (PubMed:26929322). DpdA deletion mutant (in a dpdD mutant background) lacks both dPreQ0 and dADG (PubMed:30159947).</text>
</comment>
<comment type="similarity">
    <text evidence="5">Belongs to the DNA-guanine transglycosylase family.</text>
</comment>
<evidence type="ECO:0000250" key="1">
    <source>
        <dbReference type="UniProtKB" id="P28720"/>
    </source>
</evidence>
<evidence type="ECO:0000269" key="2">
    <source>
    </source>
</evidence>
<evidence type="ECO:0000269" key="3">
    <source>
    </source>
</evidence>
<evidence type="ECO:0000303" key="4">
    <source>
    </source>
</evidence>
<evidence type="ECO:0000305" key="5"/>
<evidence type="ECO:0000305" key="6">
    <source>
    </source>
</evidence>
<evidence type="ECO:0000312" key="7">
    <source>
        <dbReference type="EMBL" id="EFY12575.1"/>
    </source>
</evidence>
<evidence type="ECO:0007829" key="8">
    <source>
        <dbReference type="PDB" id="7UI4"/>
    </source>
</evidence>
<protein>
    <recommendedName>
        <fullName evidence="5">DNA-guanine transglycosylase</fullName>
        <ecNumber evidence="6">2.4.2.-</ecNumber>
    </recommendedName>
</protein>
<gene>
    <name evidence="4" type="primary">dpdA</name>
    <name evidence="4" type="synonym">tgtA5</name>
    <name evidence="7" type="ORF">SEEM315_10824</name>
</gene>
<name>DPDA_SALMO</name>